<sequence length="154" mass="17166">MGLSDGEWQLVLNAWGKVETDVAGHGQEVLIRLFTGHPETLEKFDKFKHLKTEAEMKASEDLKKHGNTVLTALGGILKKKGHHEAEVKHLAESHANKHKIPVKYLEFISDAIIHVLHDKHPSDFGADAQAAMSKALELFRNEMAAQYKVLGFHG</sequence>
<feature type="initiator methionine" description="Removed" evidence="8">
    <location>
        <position position="1"/>
    </location>
</feature>
<feature type="chain" id="PRO_0000253943" description="Myoglobin">
    <location>
        <begin position="2"/>
        <end position="154"/>
    </location>
</feature>
<feature type="domain" description="Globin" evidence="7">
    <location>
        <begin position="2"/>
        <end position="148"/>
    </location>
</feature>
<feature type="binding site" evidence="5">
    <location>
        <position position="65"/>
    </location>
    <ligand>
        <name>nitrite</name>
        <dbReference type="ChEBI" id="CHEBI:16301"/>
    </ligand>
</feature>
<feature type="binding site" evidence="3 7">
    <location>
        <position position="65"/>
    </location>
    <ligand>
        <name>O2</name>
        <dbReference type="ChEBI" id="CHEBI:15379"/>
    </ligand>
</feature>
<feature type="binding site" description="proximal binding residue" evidence="1">
    <location>
        <position position="94"/>
    </location>
    <ligand>
        <name>heme b</name>
        <dbReference type="ChEBI" id="CHEBI:60344"/>
    </ligand>
    <ligandPart>
        <name>Fe</name>
        <dbReference type="ChEBI" id="CHEBI:18248"/>
    </ligandPart>
</feature>
<feature type="modified residue" description="Phosphoserine" evidence="6">
    <location>
        <position position="4"/>
    </location>
</feature>
<feature type="modified residue" description="Phosphothreonine" evidence="4">
    <location>
        <position position="68"/>
    </location>
</feature>
<dbReference type="EC" id="1.7.-.-" evidence="1"/>
<dbReference type="EC" id="1.11.1.-" evidence="1"/>
<dbReference type="RefSeq" id="XP_006074486.1">
    <property type="nucleotide sequence ID" value="XM_006074424.4"/>
</dbReference>
<dbReference type="SMR" id="P84997"/>
<dbReference type="CarbonylDB" id="P84997"/>
<dbReference type="GeneID" id="102413227"/>
<dbReference type="KEGG" id="bbub:102413227"/>
<dbReference type="CTD" id="4151"/>
<dbReference type="OrthoDB" id="6344802at2759"/>
<dbReference type="GO" id="GO:0070062">
    <property type="term" value="C:extracellular exosome"/>
    <property type="evidence" value="ECO:0007669"/>
    <property type="project" value="TreeGrafter"/>
</dbReference>
<dbReference type="GO" id="GO:0016528">
    <property type="term" value="C:sarcoplasm"/>
    <property type="evidence" value="ECO:0000250"/>
    <property type="project" value="UniProtKB"/>
</dbReference>
<dbReference type="GO" id="GO:0020037">
    <property type="term" value="F:heme binding"/>
    <property type="evidence" value="ECO:0007669"/>
    <property type="project" value="InterPro"/>
</dbReference>
<dbReference type="GO" id="GO:0046872">
    <property type="term" value="F:metal ion binding"/>
    <property type="evidence" value="ECO:0007669"/>
    <property type="project" value="UniProtKB-KW"/>
</dbReference>
<dbReference type="GO" id="GO:0098809">
    <property type="term" value="F:nitrite reductase activity"/>
    <property type="evidence" value="ECO:0000250"/>
    <property type="project" value="UniProtKB"/>
</dbReference>
<dbReference type="GO" id="GO:0019825">
    <property type="term" value="F:oxygen binding"/>
    <property type="evidence" value="ECO:0000314"/>
    <property type="project" value="UniProtKB"/>
</dbReference>
<dbReference type="GO" id="GO:0005344">
    <property type="term" value="F:oxygen carrier activity"/>
    <property type="evidence" value="ECO:0000314"/>
    <property type="project" value="UniProtKB"/>
</dbReference>
<dbReference type="GO" id="GO:0004601">
    <property type="term" value="F:peroxidase activity"/>
    <property type="evidence" value="ECO:0000250"/>
    <property type="project" value="UniProtKB"/>
</dbReference>
<dbReference type="GO" id="GO:0015671">
    <property type="term" value="P:oxygen transport"/>
    <property type="evidence" value="ECO:0000314"/>
    <property type="project" value="UniProtKB"/>
</dbReference>
<dbReference type="GO" id="GO:0019430">
    <property type="term" value="P:removal of superoxide radicals"/>
    <property type="evidence" value="ECO:0000250"/>
    <property type="project" value="UniProtKB"/>
</dbReference>
<dbReference type="Gene3D" id="6.10.140.2100">
    <property type="match status" value="1"/>
</dbReference>
<dbReference type="Gene3D" id="6.10.140.2110">
    <property type="match status" value="1"/>
</dbReference>
<dbReference type="InterPro" id="IPR000971">
    <property type="entry name" value="Globin"/>
</dbReference>
<dbReference type="InterPro" id="IPR009050">
    <property type="entry name" value="Globin-like_sf"/>
</dbReference>
<dbReference type="InterPro" id="IPR002335">
    <property type="entry name" value="Myoglobin"/>
</dbReference>
<dbReference type="PANTHER" id="PTHR47132">
    <property type="entry name" value="MYOGLOBIN"/>
    <property type="match status" value="1"/>
</dbReference>
<dbReference type="PANTHER" id="PTHR47132:SF1">
    <property type="entry name" value="MYOGLOBIN"/>
    <property type="match status" value="1"/>
</dbReference>
<dbReference type="Pfam" id="PF00042">
    <property type="entry name" value="Globin"/>
    <property type="match status" value="1"/>
</dbReference>
<dbReference type="PRINTS" id="PR00613">
    <property type="entry name" value="MYOGLOBIN"/>
</dbReference>
<dbReference type="SUPFAM" id="SSF46458">
    <property type="entry name" value="Globin-like"/>
    <property type="match status" value="1"/>
</dbReference>
<dbReference type="PROSITE" id="PS01033">
    <property type="entry name" value="GLOBIN"/>
    <property type="match status" value="1"/>
</dbReference>
<proteinExistence type="evidence at protein level"/>
<keyword id="KW-0963">Cytoplasm</keyword>
<keyword id="KW-0903">Direct protein sequencing</keyword>
<keyword id="KW-0349">Heme</keyword>
<keyword id="KW-0408">Iron</keyword>
<keyword id="KW-0479">Metal-binding</keyword>
<keyword id="KW-0514">Muscle protein</keyword>
<keyword id="KW-0560">Oxidoreductase</keyword>
<keyword id="KW-0561">Oxygen transport</keyword>
<keyword id="KW-0597">Phosphoprotein</keyword>
<keyword id="KW-0813">Transport</keyword>
<gene>
    <name evidence="1" type="primary">MB</name>
</gene>
<reference evidence="9" key="1">
    <citation type="journal article" date="2006" name="Comp. Biochem. Physiol.">
        <title>Characterization and kinetics studies of water buffalo (Bubalus bubalis) myoglobin.</title>
        <authorList>
            <person name="Dosi R."/>
            <person name="Di maro A."/>
            <person name="Chambery A."/>
            <person name="Colonna G."/>
            <person name="Costantimi S."/>
            <person name="Geraci G."/>
            <person name="Parente A."/>
        </authorList>
    </citation>
    <scope>PROTEIN SEQUENCE OF 2-154</scope>
    <scope>FUNCTION</scope>
    <scope>MASS SPECTROMETRY</scope>
    <source>
        <tissue evidence="8">Longissimus dorsi muscle</tissue>
    </source>
</reference>
<name>MYG_BUBBU</name>
<evidence type="ECO:0000250" key="1">
    <source>
        <dbReference type="UniProtKB" id="P02144"/>
    </source>
</evidence>
<evidence type="ECO:0000250" key="2">
    <source>
        <dbReference type="UniProtKB" id="P02185"/>
    </source>
</evidence>
<evidence type="ECO:0000250" key="3">
    <source>
        <dbReference type="UniProtKB" id="P02189"/>
    </source>
</evidence>
<evidence type="ECO:0000250" key="4">
    <source>
        <dbReference type="UniProtKB" id="P04247"/>
    </source>
</evidence>
<evidence type="ECO:0000250" key="5">
    <source>
        <dbReference type="UniProtKB" id="P68082"/>
    </source>
</evidence>
<evidence type="ECO:0000250" key="6">
    <source>
        <dbReference type="UniProtKB" id="Q9QZ76"/>
    </source>
</evidence>
<evidence type="ECO:0000255" key="7">
    <source>
        <dbReference type="PROSITE-ProRule" id="PRU00238"/>
    </source>
</evidence>
<evidence type="ECO:0000269" key="8">
    <source>
    </source>
</evidence>
<evidence type="ECO:0000305" key="9"/>
<accession>P84997</accession>
<organism>
    <name type="scientific">Bubalus bubalis</name>
    <name type="common">Domestic water buffalo</name>
    <dbReference type="NCBI Taxonomy" id="89462"/>
    <lineage>
        <taxon>Eukaryota</taxon>
        <taxon>Metazoa</taxon>
        <taxon>Chordata</taxon>
        <taxon>Craniata</taxon>
        <taxon>Vertebrata</taxon>
        <taxon>Euteleostomi</taxon>
        <taxon>Mammalia</taxon>
        <taxon>Eutheria</taxon>
        <taxon>Laurasiatheria</taxon>
        <taxon>Artiodactyla</taxon>
        <taxon>Ruminantia</taxon>
        <taxon>Pecora</taxon>
        <taxon>Bovidae</taxon>
        <taxon>Bovinae</taxon>
        <taxon>Bubalus</taxon>
    </lineage>
</organism>
<comment type="function">
    <text evidence="1 8">Monomeric heme protein which primary function is to store oxygen and facilitate its diffusion within muscle tissues. Reversibly binds oxygen through a pentacoordinated heme iron and enables its timely and efficient release as needed during periods of heightened demand (PubMed:16959515). Depending on the oxidative conditions of tissues and cells, and in addition to its ability to bind oxygen, it also has a nitrite reductase activity whereby it regulates the production of bioactive nitric oxide. Under stress conditions, like hypoxia and anoxia, it also protects cells against reactive oxygen species thanks to its pseudoperoxidase activity (By similarity).</text>
</comment>
<comment type="catalytic activity">
    <reaction evidence="1">
        <text>Fe(III)-heme b-[protein] + nitric oxide + H2O = Fe(II)-heme b-[protein] + nitrite + 2 H(+)</text>
        <dbReference type="Rhea" id="RHEA:77711"/>
        <dbReference type="Rhea" id="RHEA-COMP:18975"/>
        <dbReference type="Rhea" id="RHEA-COMP:18976"/>
        <dbReference type="ChEBI" id="CHEBI:15377"/>
        <dbReference type="ChEBI" id="CHEBI:15378"/>
        <dbReference type="ChEBI" id="CHEBI:16301"/>
        <dbReference type="ChEBI" id="CHEBI:16480"/>
        <dbReference type="ChEBI" id="CHEBI:55376"/>
        <dbReference type="ChEBI" id="CHEBI:60344"/>
    </reaction>
    <physiologicalReaction direction="right-to-left" evidence="1">
        <dbReference type="Rhea" id="RHEA:77713"/>
    </physiologicalReaction>
</comment>
<comment type="catalytic activity">
    <reaction evidence="1">
        <text>H2O2 + AH2 = A + 2 H2O</text>
        <dbReference type="Rhea" id="RHEA:30275"/>
        <dbReference type="ChEBI" id="CHEBI:13193"/>
        <dbReference type="ChEBI" id="CHEBI:15377"/>
        <dbReference type="ChEBI" id="CHEBI:16240"/>
        <dbReference type="ChEBI" id="CHEBI:17499"/>
    </reaction>
</comment>
<comment type="subunit">
    <text evidence="2">Monomeric.</text>
</comment>
<comment type="subcellular location">
    <subcellularLocation>
        <location evidence="1">Cytoplasm</location>
        <location evidence="1">Sarcoplasm</location>
    </subcellularLocation>
</comment>
<comment type="mass spectrometry" mass="17034.5" error="0.25" method="Electrospray" evidence="8"/>
<comment type="similarity">
    <text evidence="7">Belongs to the globin family.</text>
</comment>
<protein>
    <recommendedName>
        <fullName>Myoglobin</fullName>
    </recommendedName>
    <alternativeName>
        <fullName evidence="1">Nitrite reductase MB</fullName>
        <ecNumber evidence="1">1.7.-.-</ecNumber>
    </alternativeName>
    <alternativeName>
        <fullName evidence="1">Pseudoperoxidase MB</fullName>
        <ecNumber evidence="1">1.11.1.-</ecNumber>
    </alternativeName>
</protein>